<feature type="chain" id="PRO_0000217535" description="Magnesium-protoporphyrin IX monomethyl ester [oxidative] cyclase 1">
    <location>
        <begin position="1"/>
        <end position="380"/>
    </location>
</feature>
<protein>
    <recommendedName>
        <fullName evidence="1">Magnesium-protoporphyrin IX monomethyl ester [oxidative] cyclase 1</fullName>
        <shortName evidence="1">Mg-protoporphyrin IX monomethyl ester oxidative cyclase 1</shortName>
        <ecNumber evidence="1">1.14.13.81</ecNumber>
    </recommendedName>
</protein>
<evidence type="ECO:0000255" key="1">
    <source>
        <dbReference type="HAMAP-Rule" id="MF_01840"/>
    </source>
</evidence>
<evidence type="ECO:0000305" key="2"/>
<dbReference type="EC" id="1.14.13.81" evidence="1"/>
<dbReference type="EMBL" id="BA000039">
    <property type="protein sequence ID" value="BAC08978.1"/>
    <property type="status" value="ALT_INIT"/>
    <property type="molecule type" value="Genomic_DNA"/>
</dbReference>
<dbReference type="RefSeq" id="NP_682216.1">
    <property type="nucleotide sequence ID" value="NC_004113.1"/>
</dbReference>
<dbReference type="RefSeq" id="WP_164920870.1">
    <property type="nucleotide sequence ID" value="NC_004113.1"/>
</dbReference>
<dbReference type="STRING" id="197221.gene:10748025"/>
<dbReference type="EnsemblBacteria" id="BAC08978">
    <property type="protein sequence ID" value="BAC08978"/>
    <property type="gene ID" value="BAC08978"/>
</dbReference>
<dbReference type="KEGG" id="tel:tlr1426"/>
<dbReference type="PATRIC" id="fig|197221.4.peg.1498"/>
<dbReference type="eggNOG" id="COG1633">
    <property type="taxonomic scope" value="Bacteria"/>
</dbReference>
<dbReference type="UniPathway" id="UPA00670"/>
<dbReference type="Proteomes" id="UP000000440">
    <property type="component" value="Chromosome"/>
</dbReference>
<dbReference type="GO" id="GO:0005506">
    <property type="term" value="F:iron ion binding"/>
    <property type="evidence" value="ECO:0007669"/>
    <property type="project" value="UniProtKB-UniRule"/>
</dbReference>
<dbReference type="GO" id="GO:0048529">
    <property type="term" value="F:magnesium-protoporphyrin IX monomethyl ester (oxidative) cyclase activity"/>
    <property type="evidence" value="ECO:0007669"/>
    <property type="project" value="UniProtKB-UniRule"/>
</dbReference>
<dbReference type="GO" id="GO:0036068">
    <property type="term" value="P:light-independent chlorophyll biosynthetic process"/>
    <property type="evidence" value="ECO:0007669"/>
    <property type="project" value="UniProtKB-UniRule"/>
</dbReference>
<dbReference type="GO" id="GO:0015979">
    <property type="term" value="P:photosynthesis"/>
    <property type="evidence" value="ECO:0007669"/>
    <property type="project" value="UniProtKB-UniRule"/>
</dbReference>
<dbReference type="CDD" id="cd01047">
    <property type="entry name" value="ACSF"/>
    <property type="match status" value="1"/>
</dbReference>
<dbReference type="HAMAP" id="MF_01840">
    <property type="entry name" value="AcsF"/>
    <property type="match status" value="1"/>
</dbReference>
<dbReference type="InterPro" id="IPR008434">
    <property type="entry name" value="AcsF"/>
</dbReference>
<dbReference type="InterPro" id="IPR009078">
    <property type="entry name" value="Ferritin-like_SF"/>
</dbReference>
<dbReference type="InterPro" id="IPR003251">
    <property type="entry name" value="Rr_diiron-bd_dom"/>
</dbReference>
<dbReference type="NCBIfam" id="TIGR02029">
    <property type="entry name" value="AcsF"/>
    <property type="match status" value="1"/>
</dbReference>
<dbReference type="NCBIfam" id="NF010172">
    <property type="entry name" value="PRK13654.1"/>
    <property type="match status" value="1"/>
</dbReference>
<dbReference type="PANTHER" id="PTHR31053">
    <property type="entry name" value="MAGNESIUM-PROTOPORPHYRIN IX MONOMETHYL ESTER [OXIDATIVE] CYCLASE, CHLOROPLASTIC"/>
    <property type="match status" value="1"/>
</dbReference>
<dbReference type="PANTHER" id="PTHR31053:SF2">
    <property type="entry name" value="MAGNESIUM-PROTOPORPHYRIN IX MONOMETHYL ESTER [OXIDATIVE] CYCLASE, CHLOROPLASTIC"/>
    <property type="match status" value="1"/>
</dbReference>
<dbReference type="Pfam" id="PF02915">
    <property type="entry name" value="Rubrerythrin"/>
    <property type="match status" value="1"/>
</dbReference>
<dbReference type="SUPFAM" id="SSF47240">
    <property type="entry name" value="Ferritin-like"/>
    <property type="match status" value="1"/>
</dbReference>
<gene>
    <name evidence="1" type="primary">acsF1</name>
    <name type="ordered locus">tlr1426</name>
</gene>
<keyword id="KW-0149">Chlorophyll biosynthesis</keyword>
<keyword id="KW-0408">Iron</keyword>
<keyword id="KW-0479">Metal-binding</keyword>
<keyword id="KW-0521">NADP</keyword>
<keyword id="KW-0560">Oxidoreductase</keyword>
<keyword id="KW-0602">Photosynthesis</keyword>
<keyword id="KW-1185">Reference proteome</keyword>
<reference key="1">
    <citation type="journal article" date="2002" name="DNA Res.">
        <title>Complete genome structure of the thermophilic cyanobacterium Thermosynechococcus elongatus BP-1.</title>
        <authorList>
            <person name="Nakamura Y."/>
            <person name="Kaneko T."/>
            <person name="Sato S."/>
            <person name="Ikeuchi M."/>
            <person name="Katoh H."/>
            <person name="Sasamoto S."/>
            <person name="Watanabe A."/>
            <person name="Iriguchi M."/>
            <person name="Kawashima K."/>
            <person name="Kimura T."/>
            <person name="Kishida Y."/>
            <person name="Kiyokawa C."/>
            <person name="Kohara M."/>
            <person name="Matsumoto M."/>
            <person name="Matsuno A."/>
            <person name="Nakazaki N."/>
            <person name="Shimpo S."/>
            <person name="Sugimoto M."/>
            <person name="Takeuchi C."/>
            <person name="Yamada M."/>
            <person name="Tabata S."/>
        </authorList>
    </citation>
    <scope>NUCLEOTIDE SEQUENCE [LARGE SCALE GENOMIC DNA]</scope>
    <source>
        <strain>NIES-2133 / IAM M-273 / BP-1</strain>
    </source>
</reference>
<sequence length="380" mass="45481">MVNTVAKPEFEELRPGIKAPAKETILTPRFYTTDFEAMANMDITENKAELEAILEEFRCDYNRHHFVRDEEFEQSWDHIDGETRRLFIEFLERSCTAEFSGFLLYKELSRRLKDRNPLLAECFALMSRDEARHAGFLNKAMADFNLSLDLGFLTQHRSYTYFEPEFIFYATYLSEKIGYWRYITIYRHLEKHPEHRIYPIFRFFENWCQDENRHGDFFDAVMRAQPQMLDRPRTFWQKIKEIPLSLSGKKWARYFMVCWVPPKLWCRFFLLSVFATMYLNDLQRAKFYTALGLDAREYDREVIAKTNETAGRVFPVILDVDHPEFYQRLERCVENNAKLTEIAKQNGGFLKKLPLYLSNVWQMIKLFLIPAKEPTRVAVR</sequence>
<organism>
    <name type="scientific">Thermosynechococcus vestitus (strain NIES-2133 / IAM M-273 / BP-1)</name>
    <dbReference type="NCBI Taxonomy" id="197221"/>
    <lineage>
        <taxon>Bacteria</taxon>
        <taxon>Bacillati</taxon>
        <taxon>Cyanobacteriota</taxon>
        <taxon>Cyanophyceae</taxon>
        <taxon>Acaryochloridales</taxon>
        <taxon>Thermosynechococcaceae</taxon>
        <taxon>Thermosynechococcus</taxon>
    </lineage>
</organism>
<accession>Q8DJ05</accession>
<proteinExistence type="inferred from homology"/>
<comment type="function">
    <text evidence="1">Catalyzes the formation of the isocyclic ring in chlorophyll biosynthesis. Mediates the cyclase reaction, which results in the formation of divinylprotochlorophyllide (Pchlide) characteristic of all chlorophylls from magnesium-protoporphyrin IX 13-monomethyl ester (MgPMME).</text>
</comment>
<comment type="catalytic activity">
    <reaction evidence="1">
        <text>Mg-protoporphyrin IX 13-monomethyl ester + 3 NADPH + 3 O2 + 2 H(+) = 3,8-divinyl protochlorophyllide a + 3 NADP(+) + 5 H2O</text>
        <dbReference type="Rhea" id="RHEA:33235"/>
        <dbReference type="ChEBI" id="CHEBI:15377"/>
        <dbReference type="ChEBI" id="CHEBI:15378"/>
        <dbReference type="ChEBI" id="CHEBI:15379"/>
        <dbReference type="ChEBI" id="CHEBI:57783"/>
        <dbReference type="ChEBI" id="CHEBI:58349"/>
        <dbReference type="ChEBI" id="CHEBI:58632"/>
        <dbReference type="ChEBI" id="CHEBI:60491"/>
        <dbReference type="EC" id="1.14.13.81"/>
    </reaction>
</comment>
<comment type="cofactor">
    <cofactor evidence="1">
        <name>Fe cation</name>
        <dbReference type="ChEBI" id="CHEBI:24875"/>
    </cofactor>
</comment>
<comment type="pathway">
    <text evidence="1">Porphyrin-containing compound metabolism; chlorophyll biosynthesis (light-independent).</text>
</comment>
<comment type="similarity">
    <text evidence="1">Belongs to the AcsF family.</text>
</comment>
<comment type="sequence caution" evidence="2">
    <conflict type="erroneous initiation">
        <sequence resource="EMBL-CDS" id="BAC08978"/>
    </conflict>
</comment>
<name>ACSF1_THEVB</name>